<dbReference type="EC" id="4.1.1.65" evidence="1"/>
<dbReference type="EMBL" id="CP000868">
    <property type="protein sequence ID" value="ABX14707.1"/>
    <property type="molecule type" value="Genomic_DNA"/>
</dbReference>
<dbReference type="EMBL" id="AP009385">
    <property type="protein sequence ID" value="BAG44143.1"/>
    <property type="molecule type" value="Genomic_DNA"/>
</dbReference>
<dbReference type="RefSeq" id="WP_006398783.1">
    <property type="nucleotide sequence ID" value="NC_010804.1"/>
</dbReference>
<dbReference type="SMR" id="A9AJN2"/>
<dbReference type="STRING" id="395019.BMULJ_02248"/>
<dbReference type="KEGG" id="bmj:BMULJ_02248"/>
<dbReference type="KEGG" id="bmu:Bmul_1016"/>
<dbReference type="eggNOG" id="COG0688">
    <property type="taxonomic scope" value="Bacteria"/>
</dbReference>
<dbReference type="HOGENOM" id="CLU_072492_0_0_4"/>
<dbReference type="UniPathway" id="UPA00558">
    <property type="reaction ID" value="UER00616"/>
</dbReference>
<dbReference type="Proteomes" id="UP000008815">
    <property type="component" value="Chromosome 1"/>
</dbReference>
<dbReference type="GO" id="GO:0005886">
    <property type="term" value="C:plasma membrane"/>
    <property type="evidence" value="ECO:0007669"/>
    <property type="project" value="UniProtKB-SubCell"/>
</dbReference>
<dbReference type="GO" id="GO:0004609">
    <property type="term" value="F:phosphatidylserine decarboxylase activity"/>
    <property type="evidence" value="ECO:0007669"/>
    <property type="project" value="UniProtKB-UniRule"/>
</dbReference>
<dbReference type="GO" id="GO:0006646">
    <property type="term" value="P:phosphatidylethanolamine biosynthetic process"/>
    <property type="evidence" value="ECO:0007669"/>
    <property type="project" value="UniProtKB-UniRule"/>
</dbReference>
<dbReference type="HAMAP" id="MF_00664">
    <property type="entry name" value="PS_decarb_PSD_A"/>
    <property type="match status" value="1"/>
</dbReference>
<dbReference type="InterPro" id="IPR003817">
    <property type="entry name" value="PS_Dcarbxylase"/>
</dbReference>
<dbReference type="InterPro" id="IPR033175">
    <property type="entry name" value="PSD-A"/>
</dbReference>
<dbReference type="NCBIfam" id="TIGR00164">
    <property type="entry name" value="AS_decarb"/>
    <property type="match status" value="1"/>
</dbReference>
<dbReference type="NCBIfam" id="NF003678">
    <property type="entry name" value="PRK05305.1-2"/>
    <property type="match status" value="1"/>
</dbReference>
<dbReference type="NCBIfam" id="NF003680">
    <property type="entry name" value="PRK05305.1-5"/>
    <property type="match status" value="1"/>
</dbReference>
<dbReference type="NCBIfam" id="NF003685">
    <property type="entry name" value="PRK05305.2-5"/>
    <property type="match status" value="1"/>
</dbReference>
<dbReference type="PANTHER" id="PTHR35809">
    <property type="entry name" value="ARCHAETIDYLSERINE DECARBOXYLASE PROENZYME-RELATED"/>
    <property type="match status" value="1"/>
</dbReference>
<dbReference type="PANTHER" id="PTHR35809:SF1">
    <property type="entry name" value="ARCHAETIDYLSERINE DECARBOXYLASE PROENZYME-RELATED"/>
    <property type="match status" value="1"/>
</dbReference>
<dbReference type="Pfam" id="PF02666">
    <property type="entry name" value="PS_Dcarbxylase"/>
    <property type="match status" value="1"/>
</dbReference>
<accession>A9AJN2</accession>
<reference key="1">
    <citation type="submission" date="2007-10" db="EMBL/GenBank/DDBJ databases">
        <title>Complete sequence of chromosome 1 of Burkholderia multivorans ATCC 17616.</title>
        <authorList>
            <person name="Copeland A."/>
            <person name="Lucas S."/>
            <person name="Lapidus A."/>
            <person name="Barry K."/>
            <person name="Glavina del Rio T."/>
            <person name="Dalin E."/>
            <person name="Tice H."/>
            <person name="Pitluck S."/>
            <person name="Chain P."/>
            <person name="Malfatti S."/>
            <person name="Shin M."/>
            <person name="Vergez L."/>
            <person name="Schmutz J."/>
            <person name="Larimer F."/>
            <person name="Land M."/>
            <person name="Hauser L."/>
            <person name="Kyrpides N."/>
            <person name="Kim E."/>
            <person name="Tiedje J."/>
            <person name="Richardson P."/>
        </authorList>
    </citation>
    <scope>NUCLEOTIDE SEQUENCE [LARGE SCALE GENOMIC DNA]</scope>
    <source>
        <strain>ATCC 17616 / 249</strain>
    </source>
</reference>
<reference key="2">
    <citation type="submission" date="2007-04" db="EMBL/GenBank/DDBJ databases">
        <title>Complete genome sequence of Burkholderia multivorans ATCC 17616.</title>
        <authorList>
            <person name="Ohtsubo Y."/>
            <person name="Yamashita A."/>
            <person name="Kurokawa K."/>
            <person name="Takami H."/>
            <person name="Yuhara S."/>
            <person name="Nishiyama E."/>
            <person name="Endo R."/>
            <person name="Miyazaki R."/>
            <person name="Ono A."/>
            <person name="Yano K."/>
            <person name="Ito M."/>
            <person name="Sota M."/>
            <person name="Yuji N."/>
            <person name="Hattori M."/>
            <person name="Tsuda M."/>
        </authorList>
    </citation>
    <scope>NUCLEOTIDE SEQUENCE [LARGE SCALE GENOMIC DNA]</scope>
    <source>
        <strain>ATCC 17616 / 249</strain>
    </source>
</reference>
<proteinExistence type="inferred from homology"/>
<gene>
    <name evidence="1" type="primary">psd</name>
    <name type="ordered locus">Bmul_1016</name>
    <name type="ordered locus">BMULJ_02248</name>
</gene>
<comment type="function">
    <text evidence="1">Catalyzes the formation of phosphatidylethanolamine (PtdEtn) from phosphatidylserine (PtdSer).</text>
</comment>
<comment type="catalytic activity">
    <reaction evidence="1">
        <text>a 1,2-diacyl-sn-glycero-3-phospho-L-serine + H(+) = a 1,2-diacyl-sn-glycero-3-phosphoethanolamine + CO2</text>
        <dbReference type="Rhea" id="RHEA:20828"/>
        <dbReference type="ChEBI" id="CHEBI:15378"/>
        <dbReference type="ChEBI" id="CHEBI:16526"/>
        <dbReference type="ChEBI" id="CHEBI:57262"/>
        <dbReference type="ChEBI" id="CHEBI:64612"/>
        <dbReference type="EC" id="4.1.1.65"/>
    </reaction>
</comment>
<comment type="cofactor">
    <cofactor evidence="1">
        <name>pyruvate</name>
        <dbReference type="ChEBI" id="CHEBI:15361"/>
    </cofactor>
    <text evidence="1">Binds 1 pyruvoyl group covalently per subunit.</text>
</comment>
<comment type="pathway">
    <text evidence="1">Phospholipid metabolism; phosphatidylethanolamine biosynthesis; phosphatidylethanolamine from CDP-diacylglycerol: step 2/2.</text>
</comment>
<comment type="subunit">
    <text evidence="1">Heterodimer of a large membrane-associated beta subunit and a small pyruvoyl-containing alpha subunit.</text>
</comment>
<comment type="subcellular location">
    <subcellularLocation>
        <location evidence="1">Cell membrane</location>
        <topology evidence="1">Peripheral membrane protein</topology>
    </subcellularLocation>
</comment>
<comment type="PTM">
    <text evidence="1">Is synthesized initially as an inactive proenzyme. Formation of the active enzyme involves a self-maturation process in which the active site pyruvoyl group is generated from an internal serine residue via an autocatalytic post-translational modification. Two non-identical subunits are generated from the proenzyme in this reaction, and the pyruvate is formed at the N-terminus of the alpha chain, which is derived from the carboxyl end of the proenzyme. The post-translation cleavage follows an unusual pathway, termed non-hydrolytic serinolysis, in which the side chain hydroxyl group of the serine supplies its oxygen atom to form the C-terminus of the beta chain, while the remainder of the serine residue undergoes an oxidative deamination to produce ammonia and the pyruvoyl prosthetic group on the alpha chain.</text>
</comment>
<comment type="similarity">
    <text evidence="1">Belongs to the phosphatidylserine decarboxylase family. PSD-A subfamily.</text>
</comment>
<name>PSD_BURM1</name>
<protein>
    <recommendedName>
        <fullName evidence="1">Phosphatidylserine decarboxylase proenzyme</fullName>
        <ecNumber evidence="1">4.1.1.65</ecNumber>
    </recommendedName>
    <component>
        <recommendedName>
            <fullName evidence="1">Phosphatidylserine decarboxylase alpha chain</fullName>
        </recommendedName>
    </component>
    <component>
        <recommendedName>
            <fullName evidence="1">Phosphatidylserine decarboxylase beta chain</fullName>
        </recommendedName>
    </component>
</protein>
<keyword id="KW-1003">Cell membrane</keyword>
<keyword id="KW-0210">Decarboxylase</keyword>
<keyword id="KW-0444">Lipid biosynthesis</keyword>
<keyword id="KW-0443">Lipid metabolism</keyword>
<keyword id="KW-0456">Lyase</keyword>
<keyword id="KW-0472">Membrane</keyword>
<keyword id="KW-0594">Phospholipid biosynthesis</keyword>
<keyword id="KW-1208">Phospholipid metabolism</keyword>
<keyword id="KW-0670">Pyruvate</keyword>
<keyword id="KW-1185">Reference proteome</keyword>
<keyword id="KW-0865">Zymogen</keyword>
<feature type="chain" id="PRO_1000131450" description="Phosphatidylserine decarboxylase beta chain" evidence="1">
    <location>
        <begin position="1"/>
        <end position="181"/>
    </location>
</feature>
<feature type="chain" id="PRO_1000131451" description="Phosphatidylserine decarboxylase alpha chain" evidence="1">
    <location>
        <begin position="182"/>
        <end position="214"/>
    </location>
</feature>
<feature type="active site" description="Schiff-base intermediate with substrate; via pyruvic acid" evidence="1">
    <location>
        <position position="182"/>
    </location>
</feature>
<feature type="site" description="Cleavage (non-hydrolytic); by autocatalysis" evidence="1">
    <location>
        <begin position="181"/>
        <end position="182"/>
    </location>
</feature>
<feature type="modified residue" description="Pyruvic acid (Ser); by autocatalysis" evidence="1">
    <location>
        <position position="182"/>
    </location>
</feature>
<sequence length="214" mass="23483">MNYPHPIIAREGWPFIAIAAVIALLIHAVGGFGFAWPFWLLLVFVVQFFRDPQRPIPAQPNAVLCPADGRIVAVETAHDPYANREALKISVFMNVFNVHSQRSPVDGAITKVEYFPGAFLNAAIDKASTENERNAVVIQTASGKTVTSVQIAGLIARRILCYVRAGEPLSRGQRYGFIRFGSRVDVYLPLGSRAKVSIGEKVYASSTILAELEQ</sequence>
<organism>
    <name type="scientific">Burkholderia multivorans (strain ATCC 17616 / 249)</name>
    <dbReference type="NCBI Taxonomy" id="395019"/>
    <lineage>
        <taxon>Bacteria</taxon>
        <taxon>Pseudomonadati</taxon>
        <taxon>Pseudomonadota</taxon>
        <taxon>Betaproteobacteria</taxon>
        <taxon>Burkholderiales</taxon>
        <taxon>Burkholderiaceae</taxon>
        <taxon>Burkholderia</taxon>
        <taxon>Burkholderia cepacia complex</taxon>
    </lineage>
</organism>
<evidence type="ECO:0000255" key="1">
    <source>
        <dbReference type="HAMAP-Rule" id="MF_00664"/>
    </source>
</evidence>